<accession>P28617</accession>
<reference key="1">
    <citation type="journal article" date="1992" name="Biochemistry">
        <title>Zinc, a novel structural element found in the family of bacterial adenylate kinases.</title>
        <authorList>
            <person name="Glaser P."/>
            <person name="Presecan E."/>
            <person name="Delepierre M."/>
            <person name="Surewicz W.K."/>
            <person name="Mantsch H.H."/>
            <person name="Barzu O."/>
            <person name="Gilles A.M."/>
        </authorList>
    </citation>
    <scope>NUCLEOTIDE SEQUENCE [GENOMIC DNA]</scope>
</reference>
<name>MAP1_GEOSE</name>
<feature type="chain" id="PRO_0000148926" description="Methionine aminopeptidase">
    <location>
        <begin position="1"/>
        <end position="51" status="greater than"/>
    </location>
</feature>
<feature type="non-terminal residue">
    <location>
        <position position="51"/>
    </location>
</feature>
<organism>
    <name type="scientific">Geobacillus stearothermophilus</name>
    <name type="common">Bacillus stearothermophilus</name>
    <dbReference type="NCBI Taxonomy" id="1422"/>
    <lineage>
        <taxon>Bacteria</taxon>
        <taxon>Bacillati</taxon>
        <taxon>Bacillota</taxon>
        <taxon>Bacilli</taxon>
        <taxon>Bacillales</taxon>
        <taxon>Anoxybacillaceae</taxon>
        <taxon>Geobacillus</taxon>
    </lineage>
</organism>
<sequence length="51" mass="5698">MIICKTAHEITLMREAGKIVSATLEELKNHIRPGVTTKELDAIAEEVIRSH</sequence>
<proteinExistence type="inferred from homology"/>
<keyword id="KW-0031">Aminopeptidase</keyword>
<keyword id="KW-0378">Hydrolase</keyword>
<keyword id="KW-0479">Metal-binding</keyword>
<keyword id="KW-0645">Protease</keyword>
<gene>
    <name type="primary">map</name>
</gene>
<dbReference type="EC" id="3.4.11.18"/>
<dbReference type="EMBL" id="M88104">
    <property type="protein sequence ID" value="AAA22206.1"/>
    <property type="molecule type" value="Genomic_DNA"/>
</dbReference>
<dbReference type="PIR" id="C42196">
    <property type="entry name" value="C42196"/>
</dbReference>
<dbReference type="SMR" id="P28617"/>
<dbReference type="GO" id="GO:0004239">
    <property type="term" value="F:initiator methionyl aminopeptidase activity"/>
    <property type="evidence" value="ECO:0007669"/>
    <property type="project" value="UniProtKB-EC"/>
</dbReference>
<dbReference type="GO" id="GO:0046872">
    <property type="term" value="F:metal ion binding"/>
    <property type="evidence" value="ECO:0007669"/>
    <property type="project" value="UniProtKB-KW"/>
</dbReference>
<dbReference type="GO" id="GO:0006508">
    <property type="term" value="P:proteolysis"/>
    <property type="evidence" value="ECO:0007669"/>
    <property type="project" value="UniProtKB-KW"/>
</dbReference>
<dbReference type="Gene3D" id="3.90.230.10">
    <property type="entry name" value="Creatinase/methionine aminopeptidase superfamily"/>
    <property type="match status" value="1"/>
</dbReference>
<dbReference type="InterPro" id="IPR036005">
    <property type="entry name" value="Creatinase/aminopeptidase-like"/>
</dbReference>
<dbReference type="InterPro" id="IPR000994">
    <property type="entry name" value="Pept_M24"/>
</dbReference>
<dbReference type="Pfam" id="PF00557">
    <property type="entry name" value="Peptidase_M24"/>
    <property type="match status" value="1"/>
</dbReference>
<dbReference type="SUPFAM" id="SSF55920">
    <property type="entry name" value="Creatinase/aminopeptidase"/>
    <property type="match status" value="1"/>
</dbReference>
<evidence type="ECO:0000250" key="1"/>
<evidence type="ECO:0000305" key="2"/>
<protein>
    <recommendedName>
        <fullName>Methionine aminopeptidase</fullName>
        <shortName>MAP</shortName>
        <shortName>MetAP</shortName>
        <ecNumber>3.4.11.18</ecNumber>
    </recommendedName>
    <alternativeName>
        <fullName>Peptidase M</fullName>
    </alternativeName>
</protein>
<comment type="function">
    <text evidence="1">Removes the N-terminal methionine from nascent proteins. The N-terminal methionine is often cleaved when the second residue in the primary sequence is small and uncharged (Met-Ala-, Cys, Gly, Pro, Ser, Thr, or Val). Requires deformylation of the N(alpha)-formylated initiator methionine before it can be hydrolyzed (By similarity).</text>
</comment>
<comment type="catalytic activity">
    <reaction>
        <text>Release of N-terminal amino acids, preferentially methionine, from peptides and arylamides.</text>
        <dbReference type="EC" id="3.4.11.18"/>
    </reaction>
</comment>
<comment type="cofactor">
    <cofactor evidence="1">
        <name>Co(2+)</name>
        <dbReference type="ChEBI" id="CHEBI:48828"/>
    </cofactor>
    <cofactor evidence="1">
        <name>Zn(2+)</name>
        <dbReference type="ChEBI" id="CHEBI:29105"/>
    </cofactor>
    <cofactor evidence="1">
        <name>Mn(2+)</name>
        <dbReference type="ChEBI" id="CHEBI:29035"/>
    </cofactor>
    <cofactor evidence="1">
        <name>Fe(2+)</name>
        <dbReference type="ChEBI" id="CHEBI:29033"/>
    </cofactor>
    <text evidence="1">Binds 2 divalent metal cations per subunit. Has a high-affinity and a low affinity metal-binding site. The true nature of the physiological cofactor is under debate. The enzyme is active with cobalt, zinc, manganese or divalent iron ions. Most likely, methionine aminopeptidases function as mononuclear Fe(2+)-metalloproteases under physiological conditions, and the catalytically relevant metal-binding site has been assigned to the histidine-containing high-affinity site.</text>
</comment>
<comment type="subunit">
    <text evidence="1">Monomer.</text>
</comment>
<comment type="similarity">
    <text evidence="2">Belongs to the peptidase M24A family. Methionine aminopeptidase type 1 subfamily.</text>
</comment>